<sequence>GTHPCQETCVTSTRCSTQGCHCNWPICFKN</sequence>
<organism evidence="4">
    <name type="scientific">Pigea enneasperma</name>
    <name type="common">Spade flower</name>
    <name type="synonym">Afrohybanthus enneaspermus</name>
    <dbReference type="NCBI Taxonomy" id="212266"/>
    <lineage>
        <taxon>Eukaryota</taxon>
        <taxon>Viridiplantae</taxon>
        <taxon>Streptophyta</taxon>
        <taxon>Embryophyta</taxon>
        <taxon>Tracheophyta</taxon>
        <taxon>Spermatophyta</taxon>
        <taxon>Magnoliopsida</taxon>
        <taxon>eudicotyledons</taxon>
        <taxon>Gunneridae</taxon>
        <taxon>Pentapetalae</taxon>
        <taxon>rosids</taxon>
        <taxon>fabids</taxon>
        <taxon>Malpighiales</taxon>
        <taxon>Violaceae</taxon>
        <taxon>Pigea</taxon>
    </lineage>
</organism>
<accession>C0HLN7</accession>
<evidence type="ECO:0000250" key="1">
    <source>
        <dbReference type="UniProtKB" id="C0HK37"/>
    </source>
</evidence>
<evidence type="ECO:0000255" key="2">
    <source>
        <dbReference type="PROSITE-ProRule" id="PRU00395"/>
    </source>
</evidence>
<evidence type="ECO:0000269" key="3">
    <source>
    </source>
</evidence>
<evidence type="ECO:0000303" key="4">
    <source>
    </source>
</evidence>
<evidence type="ECO:0000305" key="5"/>
<name>CYHEC_PIGEN</name>
<keyword id="KW-0903">Direct protein sequencing</keyword>
<keyword id="KW-1015">Disulfide bond</keyword>
<keyword id="KW-0960">Knottin</keyword>
<keyword id="KW-0611">Plant defense</keyword>
<proteinExistence type="evidence at protein level"/>
<comment type="function">
    <text evidence="2 3">Probably participates in a plant defense mechanism (By similarity). Does not display any cytotoxic activity towards K562, HeLa, MCF-7, HUVEC or red blood cells (PubMed:32414842). Does not bind to phospholipd membranes containing 1-palmitoyl 2-oleoyl phosphatidylcholine (POPC) or 1-palmitoyl-2-oleophosphatidylethanolamine (POPE) (PubMed:32414842).</text>
</comment>
<comment type="tissue specificity">
    <text evidence="3">Detected in stems (at protein level).</text>
</comment>
<comment type="domain">
    <text evidence="5">The presence of a 'disulfide through disulfide knot' structurally defines this protein as a knottin.</text>
</comment>
<comment type="PTM">
    <text evidence="2">This is a cyclic peptide.</text>
</comment>
<comment type="mass spectrometry"/>
<comment type="similarity">
    <text evidence="2">Belongs to the cyclotide family.</text>
</comment>
<comment type="caution">
    <text evidence="2">This peptide is cyclic. The start position was chosen by similarity to Oak1 (kalata B1) for which the DNA sequence is known.</text>
</comment>
<protein>
    <recommendedName>
        <fullName evidence="4">Cyclotide hyen-C</fullName>
    </recommendedName>
</protein>
<dbReference type="SMR" id="C0HLN7"/>
<dbReference type="GO" id="GO:0051715">
    <property type="term" value="P:cytolysis in another organism"/>
    <property type="evidence" value="ECO:0000314"/>
    <property type="project" value="UniProtKB"/>
</dbReference>
<dbReference type="GO" id="GO:0006952">
    <property type="term" value="P:defense response"/>
    <property type="evidence" value="ECO:0000314"/>
    <property type="project" value="UniProtKB"/>
</dbReference>
<dbReference type="InterPro" id="IPR005535">
    <property type="entry name" value="Cyclotide"/>
</dbReference>
<dbReference type="InterPro" id="IPR036146">
    <property type="entry name" value="Cyclotide_sf"/>
</dbReference>
<dbReference type="SUPFAM" id="SSF57038">
    <property type="entry name" value="Cyclotides"/>
    <property type="match status" value="1"/>
</dbReference>
<dbReference type="PROSITE" id="PS51052">
    <property type="entry name" value="CYCLOTIDE"/>
    <property type="match status" value="1"/>
</dbReference>
<feature type="peptide" id="PRO_0000450759" description="Cyclotide hyen-C" evidence="2">
    <location>
        <begin position="1"/>
        <end position="30"/>
    </location>
</feature>
<feature type="disulfide bond" evidence="2 3">
    <location>
        <begin position="5"/>
        <end position="20"/>
    </location>
</feature>
<feature type="disulfide bond" evidence="2 3">
    <location>
        <begin position="9"/>
        <end position="22"/>
    </location>
</feature>
<feature type="disulfide bond" evidence="2 3">
    <location>
        <begin position="15"/>
        <end position="27"/>
    </location>
</feature>
<feature type="cross-link" description="Cyclopeptide (Gly-Asn)" evidence="1">
    <location>
        <begin position="1"/>
        <end position="30"/>
    </location>
</feature>
<reference evidence="5" key="1">
    <citation type="journal article" date="2020" name="J. Biol. Chem.">
        <title>Discovery and mechanistic studies of cytotoxic cyclotides from the medicinal herb Hybanthus enneaspermus.</title>
        <authorList>
            <person name="Du Q."/>
            <person name="Chan L.Y."/>
            <person name="Gilding E.K."/>
            <person name="Henriques S.T."/>
            <person name="Condon N.D."/>
            <person name="Ravipati A.S."/>
            <person name="Kaas Q."/>
            <person name="Huang Y.H."/>
            <person name="Craik D.J."/>
        </authorList>
    </citation>
    <scope>PROTEIN SEQUENCE</scope>
    <scope>MASS SPECTROMETRY</scope>
    <scope>SYNTHESIS</scope>
    <scope>FUNCTION</scope>
    <scope>TISSUE SPECIFICITY</scope>
    <scope>DOMAIN</scope>
    <scope>DISULFIDE BONDS</scope>
</reference>